<sequence>MTLAIPLELSLFDPTSADFLVPLISFSAYFSVKSFTMRPCPRLLTRKLNYPGHIPLSPAQNALLAVGSGVVGVLDVTRGDLIASLSESTAGIFLPALHEKMKMTPEGRQIMKDRPEITNKTIEKLKELKRGTLGREYVEWLGGGGLEPESRAPVQYIDSPLLAYTMLRYRQTHDLYHTLFSLPPTLPHELSLKVLEFSNMSLPVALLSSVFGPLRLKRKETWTRDWVPWALRTGREGRSLVTVYWEKRWEQGIGELRRELGVERNDAEGVEARWGGYRKIREVERELRRKGEWVDEPEDW</sequence>
<gene>
    <name evidence="1" type="primary">COQ4</name>
    <name type="ordered locus">CNK03000</name>
</gene>
<protein>
    <recommendedName>
        <fullName evidence="1">Ubiquinone biosynthesis protein COQ4, mitochondrial</fullName>
    </recommendedName>
    <alternativeName>
        <fullName>4-hydroxy-3-methoxy-5-polyprenylbenzoate decarboxylase</fullName>
        <ecNumber evidence="1">4.1.1.130</ecNumber>
    </alternativeName>
    <alternativeName>
        <fullName evidence="1">Coenzyme Q biosynthesis protein 4</fullName>
    </alternativeName>
</protein>
<dbReference type="EC" id="4.1.1.130" evidence="1"/>
<dbReference type="EMBL" id="AE017351">
    <property type="protein sequence ID" value="AAW46378.2"/>
    <property type="status" value="ALT_INIT"/>
    <property type="molecule type" value="Genomic_DNA"/>
</dbReference>
<dbReference type="RefSeq" id="XP_567895.1">
    <property type="nucleotide sequence ID" value="XM_567895.1"/>
</dbReference>
<dbReference type="SMR" id="P0CM82"/>
<dbReference type="FunCoup" id="P0CM82">
    <property type="interactions" value="307"/>
</dbReference>
<dbReference type="STRING" id="214684.P0CM82"/>
<dbReference type="PaxDb" id="214684-P0CM82"/>
<dbReference type="EnsemblFungi" id="AAW46378">
    <property type="protein sequence ID" value="AAW46378"/>
    <property type="gene ID" value="CNK03000"/>
</dbReference>
<dbReference type="GeneID" id="3254713"/>
<dbReference type="KEGG" id="cne:CNK03000"/>
<dbReference type="eggNOG" id="KOG3244">
    <property type="taxonomic scope" value="Eukaryota"/>
</dbReference>
<dbReference type="HOGENOM" id="CLU_061241_1_0_1"/>
<dbReference type="InParanoid" id="P0CM82"/>
<dbReference type="OMA" id="YYERHFH"/>
<dbReference type="OrthoDB" id="4249at2759"/>
<dbReference type="UniPathway" id="UPA00232"/>
<dbReference type="Proteomes" id="UP000002149">
    <property type="component" value="Chromosome 11"/>
</dbReference>
<dbReference type="GO" id="GO:0031314">
    <property type="term" value="C:extrinsic component of mitochondrial inner membrane"/>
    <property type="evidence" value="ECO:0007669"/>
    <property type="project" value="UniProtKB-UniRule"/>
</dbReference>
<dbReference type="GO" id="GO:0005739">
    <property type="term" value="C:mitochondrion"/>
    <property type="evidence" value="ECO:0000318"/>
    <property type="project" value="GO_Central"/>
</dbReference>
<dbReference type="GO" id="GO:0006744">
    <property type="term" value="P:ubiquinone biosynthetic process"/>
    <property type="evidence" value="ECO:0007669"/>
    <property type="project" value="UniProtKB-UniRule"/>
</dbReference>
<dbReference type="HAMAP" id="MF_03111">
    <property type="entry name" value="Coq4"/>
    <property type="match status" value="1"/>
</dbReference>
<dbReference type="InterPro" id="IPR007715">
    <property type="entry name" value="Coq4"/>
</dbReference>
<dbReference type="InterPro" id="IPR027540">
    <property type="entry name" value="Coq4_euk"/>
</dbReference>
<dbReference type="PANTHER" id="PTHR12922">
    <property type="entry name" value="UBIQUINONE BIOSYNTHESIS PROTEIN"/>
    <property type="match status" value="1"/>
</dbReference>
<dbReference type="PANTHER" id="PTHR12922:SF7">
    <property type="entry name" value="UBIQUINONE BIOSYNTHESIS PROTEIN COQ4 HOMOLOG, MITOCHONDRIAL"/>
    <property type="match status" value="1"/>
</dbReference>
<dbReference type="Pfam" id="PF05019">
    <property type="entry name" value="Coq4"/>
    <property type="match status" value="1"/>
</dbReference>
<proteinExistence type="inferred from homology"/>
<evidence type="ECO:0000255" key="1">
    <source>
        <dbReference type="HAMAP-Rule" id="MF_03111"/>
    </source>
</evidence>
<evidence type="ECO:0000305" key="2"/>
<name>COQ4_CRYNJ</name>
<feature type="chain" id="PRO_0000388112" description="Ubiquinone biosynthesis protein COQ4, mitochondrial">
    <location>
        <begin position="1"/>
        <end position="300"/>
    </location>
</feature>
<feature type="binding site" evidence="1">
    <location>
        <position position="173"/>
    </location>
    <ligand>
        <name>Zn(2+)</name>
        <dbReference type="ChEBI" id="CHEBI:29105"/>
    </ligand>
</feature>
<feature type="binding site" evidence="1">
    <location>
        <position position="174"/>
    </location>
    <ligand>
        <name>Zn(2+)</name>
        <dbReference type="ChEBI" id="CHEBI:29105"/>
    </ligand>
</feature>
<feature type="binding site" evidence="1">
    <location>
        <position position="177"/>
    </location>
    <ligand>
        <name>Zn(2+)</name>
        <dbReference type="ChEBI" id="CHEBI:29105"/>
    </ligand>
</feature>
<feature type="binding site" evidence="1">
    <location>
        <position position="189"/>
    </location>
    <ligand>
        <name>Zn(2+)</name>
        <dbReference type="ChEBI" id="CHEBI:29105"/>
    </ligand>
</feature>
<reference key="1">
    <citation type="journal article" date="2005" name="Science">
        <title>The genome of the basidiomycetous yeast and human pathogen Cryptococcus neoformans.</title>
        <authorList>
            <person name="Loftus B.J."/>
            <person name="Fung E."/>
            <person name="Roncaglia P."/>
            <person name="Rowley D."/>
            <person name="Amedeo P."/>
            <person name="Bruno D."/>
            <person name="Vamathevan J."/>
            <person name="Miranda M."/>
            <person name="Anderson I.J."/>
            <person name="Fraser J.A."/>
            <person name="Allen J.E."/>
            <person name="Bosdet I.E."/>
            <person name="Brent M.R."/>
            <person name="Chiu R."/>
            <person name="Doering T.L."/>
            <person name="Donlin M.J."/>
            <person name="D'Souza C.A."/>
            <person name="Fox D.S."/>
            <person name="Grinberg V."/>
            <person name="Fu J."/>
            <person name="Fukushima M."/>
            <person name="Haas B.J."/>
            <person name="Huang J.C."/>
            <person name="Janbon G."/>
            <person name="Jones S.J.M."/>
            <person name="Koo H.L."/>
            <person name="Krzywinski M.I."/>
            <person name="Kwon-Chung K.J."/>
            <person name="Lengeler K.B."/>
            <person name="Maiti R."/>
            <person name="Marra M.A."/>
            <person name="Marra R.E."/>
            <person name="Mathewson C.A."/>
            <person name="Mitchell T.G."/>
            <person name="Pertea M."/>
            <person name="Riggs F.R."/>
            <person name="Salzberg S.L."/>
            <person name="Schein J.E."/>
            <person name="Shvartsbeyn A."/>
            <person name="Shin H."/>
            <person name="Shumway M."/>
            <person name="Specht C.A."/>
            <person name="Suh B.B."/>
            <person name="Tenney A."/>
            <person name="Utterback T.R."/>
            <person name="Wickes B.L."/>
            <person name="Wortman J.R."/>
            <person name="Wye N.H."/>
            <person name="Kronstad J.W."/>
            <person name="Lodge J.K."/>
            <person name="Heitman J."/>
            <person name="Davis R.W."/>
            <person name="Fraser C.M."/>
            <person name="Hyman R.W."/>
        </authorList>
    </citation>
    <scope>NUCLEOTIDE SEQUENCE [LARGE SCALE GENOMIC DNA]</scope>
    <source>
        <strain>JEC21 / ATCC MYA-565</strain>
    </source>
</reference>
<organism>
    <name type="scientific">Cryptococcus neoformans var. neoformans serotype D (strain JEC21 / ATCC MYA-565)</name>
    <name type="common">Filobasidiella neoformans</name>
    <dbReference type="NCBI Taxonomy" id="214684"/>
    <lineage>
        <taxon>Eukaryota</taxon>
        <taxon>Fungi</taxon>
        <taxon>Dikarya</taxon>
        <taxon>Basidiomycota</taxon>
        <taxon>Agaricomycotina</taxon>
        <taxon>Tremellomycetes</taxon>
        <taxon>Tremellales</taxon>
        <taxon>Cryptococcaceae</taxon>
        <taxon>Cryptococcus</taxon>
        <taxon>Cryptococcus neoformans species complex</taxon>
    </lineage>
</organism>
<comment type="function">
    <text evidence="1">Lyase that catalyzes the C1-decarboxylation of 4-hydroxy-3-methoxy-5-(all-trans-polyprenyl)benzoic acid into 2-methoxy-6-(all-trans-polyprenyl)phenol during ubiquinone biosynthesis.</text>
</comment>
<comment type="catalytic activity">
    <reaction evidence="1">
        <text>a 4-hydroxy-3-methoxy-5-(all-trans-polyprenyl)benzoate + H(+) = a 2-methoxy-6-(all-trans-polyprenyl)phenol + CO2</text>
        <dbReference type="Rhea" id="RHEA:81179"/>
        <dbReference type="Rhea" id="RHEA-COMP:9551"/>
        <dbReference type="Rhea" id="RHEA-COMP:10931"/>
        <dbReference type="ChEBI" id="CHEBI:15378"/>
        <dbReference type="ChEBI" id="CHEBI:16526"/>
        <dbReference type="ChEBI" id="CHEBI:62731"/>
        <dbReference type="ChEBI" id="CHEBI:84443"/>
        <dbReference type="EC" id="4.1.1.130"/>
    </reaction>
</comment>
<comment type="cofactor">
    <cofactor evidence="1">
        <name>Zn(2+)</name>
        <dbReference type="ChEBI" id="CHEBI:29105"/>
    </cofactor>
</comment>
<comment type="pathway">
    <text evidence="1">Cofactor biosynthesis; ubiquinone biosynthesis.</text>
</comment>
<comment type="subunit">
    <text evidence="1">Component of a multi-subunit COQ enzyme complex, composed of at least COQ3, COQ4, COQ5, COQ6, COQ7 and COQ9.</text>
</comment>
<comment type="subcellular location">
    <subcellularLocation>
        <location evidence="1">Mitochondrion inner membrane</location>
        <topology evidence="1">Peripheral membrane protein</topology>
        <orientation evidence="1">Matrix side</orientation>
    </subcellularLocation>
</comment>
<comment type="miscellaneous">
    <text evidence="1">This protein may be expected to contain an N-terminal transit peptide but none has been predicted.</text>
</comment>
<comment type="similarity">
    <text evidence="1">Belongs to the COQ4 family.</text>
</comment>
<comment type="sequence caution" evidence="2">
    <conflict type="erroneous initiation">
        <sequence resource="EMBL-CDS" id="AAW46378"/>
    </conflict>
    <text>Truncated N-terminus.</text>
</comment>
<accession>P0CM82</accession>
<accession>Q55KD8</accession>
<accession>Q5K969</accession>
<keyword id="KW-0456">Lyase</keyword>
<keyword id="KW-0472">Membrane</keyword>
<keyword id="KW-0479">Metal-binding</keyword>
<keyword id="KW-0496">Mitochondrion</keyword>
<keyword id="KW-0999">Mitochondrion inner membrane</keyword>
<keyword id="KW-1185">Reference proteome</keyword>
<keyword id="KW-0831">Ubiquinone biosynthesis</keyword>
<keyword id="KW-0862">Zinc</keyword>